<accession>A5ISA9</accession>
<name>RL28_STAA9</name>
<gene>
    <name evidence="1" type="primary">rpmB</name>
    <name type="ordered locus">SaurJH9_1283</name>
</gene>
<comment type="similarity">
    <text evidence="1">Belongs to the bacterial ribosomal protein bL28 family.</text>
</comment>
<sequence length="62" mass="6977">MGKQCFVTGRKASTGNRRSHALNSTKRRWNANLQKVRILVDGKPKKVWVSARALKSGKVTRV</sequence>
<dbReference type="EMBL" id="CP000703">
    <property type="protein sequence ID" value="ABQ49082.1"/>
    <property type="molecule type" value="Genomic_DNA"/>
</dbReference>
<dbReference type="RefSeq" id="WP_000517908.1">
    <property type="nucleotide sequence ID" value="NC_009487.1"/>
</dbReference>
<dbReference type="SMR" id="A5ISA9"/>
<dbReference type="GeneID" id="98345539"/>
<dbReference type="KEGG" id="saj:SaurJH9_1283"/>
<dbReference type="HOGENOM" id="CLU_064548_7_1_9"/>
<dbReference type="GO" id="GO:1990904">
    <property type="term" value="C:ribonucleoprotein complex"/>
    <property type="evidence" value="ECO:0007669"/>
    <property type="project" value="UniProtKB-KW"/>
</dbReference>
<dbReference type="GO" id="GO:0005840">
    <property type="term" value="C:ribosome"/>
    <property type="evidence" value="ECO:0007669"/>
    <property type="project" value="UniProtKB-KW"/>
</dbReference>
<dbReference type="GO" id="GO:0003735">
    <property type="term" value="F:structural constituent of ribosome"/>
    <property type="evidence" value="ECO:0007669"/>
    <property type="project" value="InterPro"/>
</dbReference>
<dbReference type="GO" id="GO:0006412">
    <property type="term" value="P:translation"/>
    <property type="evidence" value="ECO:0007669"/>
    <property type="project" value="UniProtKB-UniRule"/>
</dbReference>
<dbReference type="Gene3D" id="2.30.170.40">
    <property type="entry name" value="Ribosomal protein L28/L24"/>
    <property type="match status" value="1"/>
</dbReference>
<dbReference type="HAMAP" id="MF_00373">
    <property type="entry name" value="Ribosomal_bL28"/>
    <property type="match status" value="1"/>
</dbReference>
<dbReference type="InterPro" id="IPR050096">
    <property type="entry name" value="Bacterial_rp_bL28"/>
</dbReference>
<dbReference type="InterPro" id="IPR026569">
    <property type="entry name" value="Ribosomal_bL28"/>
</dbReference>
<dbReference type="InterPro" id="IPR034704">
    <property type="entry name" value="Ribosomal_bL28/bL31-like_sf"/>
</dbReference>
<dbReference type="InterPro" id="IPR001383">
    <property type="entry name" value="Ribosomal_bL28_bact-type"/>
</dbReference>
<dbReference type="InterPro" id="IPR037147">
    <property type="entry name" value="Ribosomal_bL28_sf"/>
</dbReference>
<dbReference type="NCBIfam" id="TIGR00009">
    <property type="entry name" value="L28"/>
    <property type="match status" value="1"/>
</dbReference>
<dbReference type="PANTHER" id="PTHR39080">
    <property type="entry name" value="50S RIBOSOMAL PROTEIN L28"/>
    <property type="match status" value="1"/>
</dbReference>
<dbReference type="PANTHER" id="PTHR39080:SF1">
    <property type="entry name" value="LARGE RIBOSOMAL SUBUNIT PROTEIN BL28A"/>
    <property type="match status" value="1"/>
</dbReference>
<dbReference type="Pfam" id="PF00830">
    <property type="entry name" value="Ribosomal_L28"/>
    <property type="match status" value="1"/>
</dbReference>
<dbReference type="SUPFAM" id="SSF143800">
    <property type="entry name" value="L28p-like"/>
    <property type="match status" value="1"/>
</dbReference>
<proteinExistence type="inferred from homology"/>
<organism>
    <name type="scientific">Staphylococcus aureus (strain JH9)</name>
    <dbReference type="NCBI Taxonomy" id="359786"/>
    <lineage>
        <taxon>Bacteria</taxon>
        <taxon>Bacillati</taxon>
        <taxon>Bacillota</taxon>
        <taxon>Bacilli</taxon>
        <taxon>Bacillales</taxon>
        <taxon>Staphylococcaceae</taxon>
        <taxon>Staphylococcus</taxon>
    </lineage>
</organism>
<feature type="chain" id="PRO_1000079867" description="Large ribosomal subunit protein bL28">
    <location>
        <begin position="1"/>
        <end position="62"/>
    </location>
</feature>
<feature type="region of interest" description="Disordered" evidence="2">
    <location>
        <begin position="1"/>
        <end position="22"/>
    </location>
</feature>
<protein>
    <recommendedName>
        <fullName evidence="1">Large ribosomal subunit protein bL28</fullName>
    </recommendedName>
    <alternativeName>
        <fullName evidence="3">50S ribosomal protein L28</fullName>
    </alternativeName>
</protein>
<evidence type="ECO:0000255" key="1">
    <source>
        <dbReference type="HAMAP-Rule" id="MF_00373"/>
    </source>
</evidence>
<evidence type="ECO:0000256" key="2">
    <source>
        <dbReference type="SAM" id="MobiDB-lite"/>
    </source>
</evidence>
<evidence type="ECO:0000305" key="3"/>
<reference key="1">
    <citation type="submission" date="2007-05" db="EMBL/GenBank/DDBJ databases">
        <title>Complete sequence of chromosome of Staphylococcus aureus subsp. aureus JH9.</title>
        <authorList>
            <consortium name="US DOE Joint Genome Institute"/>
            <person name="Copeland A."/>
            <person name="Lucas S."/>
            <person name="Lapidus A."/>
            <person name="Barry K."/>
            <person name="Detter J.C."/>
            <person name="Glavina del Rio T."/>
            <person name="Hammon N."/>
            <person name="Israni S."/>
            <person name="Pitluck S."/>
            <person name="Chain P."/>
            <person name="Malfatti S."/>
            <person name="Shin M."/>
            <person name="Vergez L."/>
            <person name="Schmutz J."/>
            <person name="Larimer F."/>
            <person name="Land M."/>
            <person name="Hauser L."/>
            <person name="Kyrpides N."/>
            <person name="Kim E."/>
            <person name="Tomasz A."/>
            <person name="Richardson P."/>
        </authorList>
    </citation>
    <scope>NUCLEOTIDE SEQUENCE [LARGE SCALE GENOMIC DNA]</scope>
    <source>
        <strain>JH9</strain>
    </source>
</reference>
<keyword id="KW-0687">Ribonucleoprotein</keyword>
<keyword id="KW-0689">Ribosomal protein</keyword>